<gene>
    <name evidence="1" type="primary">rpoB</name>
    <name type="ordered locus">BCA_0131</name>
</gene>
<dbReference type="EC" id="2.7.7.6" evidence="1"/>
<dbReference type="EMBL" id="CP001407">
    <property type="protein sequence ID" value="ACO29504.1"/>
    <property type="molecule type" value="Genomic_DNA"/>
</dbReference>
<dbReference type="RefSeq" id="WP_000147554.1">
    <property type="nucleotide sequence ID" value="NZ_CP009318.1"/>
</dbReference>
<dbReference type="SMR" id="C1ET31"/>
<dbReference type="GeneID" id="75083383"/>
<dbReference type="KEGG" id="bcx:BCA_0131"/>
<dbReference type="PATRIC" id="fig|572264.18.peg.166"/>
<dbReference type="Proteomes" id="UP000002210">
    <property type="component" value="Chromosome"/>
</dbReference>
<dbReference type="GO" id="GO:0000428">
    <property type="term" value="C:DNA-directed RNA polymerase complex"/>
    <property type="evidence" value="ECO:0007669"/>
    <property type="project" value="UniProtKB-KW"/>
</dbReference>
<dbReference type="GO" id="GO:0003677">
    <property type="term" value="F:DNA binding"/>
    <property type="evidence" value="ECO:0007669"/>
    <property type="project" value="UniProtKB-UniRule"/>
</dbReference>
<dbReference type="GO" id="GO:0003899">
    <property type="term" value="F:DNA-directed RNA polymerase activity"/>
    <property type="evidence" value="ECO:0007669"/>
    <property type="project" value="UniProtKB-UniRule"/>
</dbReference>
<dbReference type="GO" id="GO:0032549">
    <property type="term" value="F:ribonucleoside binding"/>
    <property type="evidence" value="ECO:0007669"/>
    <property type="project" value="InterPro"/>
</dbReference>
<dbReference type="GO" id="GO:0006351">
    <property type="term" value="P:DNA-templated transcription"/>
    <property type="evidence" value="ECO:0007669"/>
    <property type="project" value="UniProtKB-UniRule"/>
</dbReference>
<dbReference type="CDD" id="cd00653">
    <property type="entry name" value="RNA_pol_B_RPB2"/>
    <property type="match status" value="1"/>
</dbReference>
<dbReference type="FunFam" id="3.90.1800.10:FF:000001">
    <property type="entry name" value="DNA-directed RNA polymerase subunit beta"/>
    <property type="match status" value="1"/>
</dbReference>
<dbReference type="Gene3D" id="2.40.50.100">
    <property type="match status" value="1"/>
</dbReference>
<dbReference type="Gene3D" id="2.40.50.150">
    <property type="match status" value="1"/>
</dbReference>
<dbReference type="Gene3D" id="3.90.1100.10">
    <property type="match status" value="2"/>
</dbReference>
<dbReference type="Gene3D" id="2.30.150.10">
    <property type="entry name" value="DNA-directed RNA polymerase, beta subunit, external 1 domain"/>
    <property type="match status" value="1"/>
</dbReference>
<dbReference type="Gene3D" id="2.40.270.10">
    <property type="entry name" value="DNA-directed RNA polymerase, subunit 2, domain 6"/>
    <property type="match status" value="1"/>
</dbReference>
<dbReference type="Gene3D" id="3.90.1800.10">
    <property type="entry name" value="RNA polymerase alpha subunit dimerisation domain"/>
    <property type="match status" value="1"/>
</dbReference>
<dbReference type="Gene3D" id="3.90.1110.10">
    <property type="entry name" value="RNA polymerase Rpb2, domain 2"/>
    <property type="match status" value="1"/>
</dbReference>
<dbReference type="HAMAP" id="MF_01321">
    <property type="entry name" value="RNApol_bact_RpoB"/>
    <property type="match status" value="1"/>
</dbReference>
<dbReference type="InterPro" id="IPR042107">
    <property type="entry name" value="DNA-dir_RNA_pol_bsu_ext_1_sf"/>
</dbReference>
<dbReference type="InterPro" id="IPR019462">
    <property type="entry name" value="DNA-dir_RNA_pol_bsu_external_1"/>
</dbReference>
<dbReference type="InterPro" id="IPR015712">
    <property type="entry name" value="DNA-dir_RNA_pol_su2"/>
</dbReference>
<dbReference type="InterPro" id="IPR007120">
    <property type="entry name" value="DNA-dir_RNAP_su2_dom"/>
</dbReference>
<dbReference type="InterPro" id="IPR037033">
    <property type="entry name" value="DNA-dir_RNAP_su2_hyb_sf"/>
</dbReference>
<dbReference type="InterPro" id="IPR010243">
    <property type="entry name" value="RNA_pol_bsu_bac"/>
</dbReference>
<dbReference type="InterPro" id="IPR007121">
    <property type="entry name" value="RNA_pol_bsu_CS"/>
</dbReference>
<dbReference type="InterPro" id="IPR007644">
    <property type="entry name" value="RNA_pol_bsu_protrusion"/>
</dbReference>
<dbReference type="InterPro" id="IPR007642">
    <property type="entry name" value="RNA_pol_Rpb2_2"/>
</dbReference>
<dbReference type="InterPro" id="IPR037034">
    <property type="entry name" value="RNA_pol_Rpb2_2_sf"/>
</dbReference>
<dbReference type="InterPro" id="IPR007645">
    <property type="entry name" value="RNA_pol_Rpb2_3"/>
</dbReference>
<dbReference type="InterPro" id="IPR007641">
    <property type="entry name" value="RNA_pol_Rpb2_7"/>
</dbReference>
<dbReference type="InterPro" id="IPR014724">
    <property type="entry name" value="RNA_pol_RPB2_OB-fold"/>
</dbReference>
<dbReference type="NCBIfam" id="NF001616">
    <property type="entry name" value="PRK00405.1"/>
    <property type="match status" value="1"/>
</dbReference>
<dbReference type="NCBIfam" id="TIGR02013">
    <property type="entry name" value="rpoB"/>
    <property type="match status" value="1"/>
</dbReference>
<dbReference type="PANTHER" id="PTHR20856">
    <property type="entry name" value="DNA-DIRECTED RNA POLYMERASE I SUBUNIT 2"/>
    <property type="match status" value="1"/>
</dbReference>
<dbReference type="Pfam" id="PF04563">
    <property type="entry name" value="RNA_pol_Rpb2_1"/>
    <property type="match status" value="1"/>
</dbReference>
<dbReference type="Pfam" id="PF04561">
    <property type="entry name" value="RNA_pol_Rpb2_2"/>
    <property type="match status" value="2"/>
</dbReference>
<dbReference type="Pfam" id="PF04565">
    <property type="entry name" value="RNA_pol_Rpb2_3"/>
    <property type="match status" value="1"/>
</dbReference>
<dbReference type="Pfam" id="PF10385">
    <property type="entry name" value="RNA_pol_Rpb2_45"/>
    <property type="match status" value="1"/>
</dbReference>
<dbReference type="Pfam" id="PF00562">
    <property type="entry name" value="RNA_pol_Rpb2_6"/>
    <property type="match status" value="1"/>
</dbReference>
<dbReference type="Pfam" id="PF04560">
    <property type="entry name" value="RNA_pol_Rpb2_7"/>
    <property type="match status" value="1"/>
</dbReference>
<dbReference type="SUPFAM" id="SSF64484">
    <property type="entry name" value="beta and beta-prime subunits of DNA dependent RNA-polymerase"/>
    <property type="match status" value="1"/>
</dbReference>
<dbReference type="PROSITE" id="PS01166">
    <property type="entry name" value="RNA_POL_BETA"/>
    <property type="match status" value="1"/>
</dbReference>
<proteinExistence type="inferred from homology"/>
<organism>
    <name type="scientific">Bacillus cereus (strain 03BB102)</name>
    <dbReference type="NCBI Taxonomy" id="572264"/>
    <lineage>
        <taxon>Bacteria</taxon>
        <taxon>Bacillati</taxon>
        <taxon>Bacillota</taxon>
        <taxon>Bacilli</taxon>
        <taxon>Bacillales</taxon>
        <taxon>Bacillaceae</taxon>
        <taxon>Bacillus</taxon>
        <taxon>Bacillus cereus group</taxon>
    </lineage>
</organism>
<sequence>MTGQLVQYGRHRQRRSYARISEVLELPNLIEIQTSSYQWFLDEGLREMFQDISPIEDFTGNLSLEFIDYSLGEPKYSVDECKERDVTYAAPLRVKVRLINKETGEVKEQDVFMGDFPLMTETGTFVINGAERVIVSQLVRSPSVYYSGKVDKNGKRGFTATVIPNRGAWLEYETDAKDVVYVRIDRTRKLPVTVLLRALGFGSDQEITELLGDNEYLSNTLEKDNTDSTEKALLEIYERLRPGEPPTVENAKSLLVSRFFDPKRYDLANVGRYKINKKLHIKNRLFNQRLAETLVDPETGEILAAEGTILDRRTLDRILPYLEKNIGFKTAKPMGGVVEGDVELQSIKIYAPESEGERVINVIGNANITRDVKHITPGDILASISYFFNLLYKVGDTDDIDHLGNRRLRSVGELLQNQFRIGLSRMERVVRERMSIQDTNAITPQALINIRPVIASIKEFFGSSQLSQFMDQTNPLAELTHKRRLSALGPGGLTRERAGFEVRDVHYSHYGRMCPIETPEGPNIGLINSLSSFAKVNEFGFIETPYRRVDPETGLVTGHVDYLTADEEDNYVVAQANMKLSEEGEFLDEDIVARFRGENIVTNKERIDYMDVSPKQVVSAATACIPFLENDDSNRALMGANMQRQAVPLMNPESPIVGTGMEYVSAKDSGAAVICKHPGIVERVEAREVWVRRYVEVDGQTVKGDLDRYKMQKFIRSNQGTCYNQRPIVSVGNEVVKGEILADGPSMELGELALGRNVLVGFMTWDGYNYEDAIIMSERLVKDDVYTSIHIEEYESEARDTKLGPEEITRDIPNVGEDALRNLDERGIIRVGAEVKDGDLLVGKVTPKGVTELTAEERLLHAIFGEKAREVRDTSLRVPHGGGGIILDVKVFNREDGDELPPGVNQLVRAYIVQKRKISEGDKMAGRHGNKGVISRILPEEDMPYLPDGTPIDIMLNPLGVPSRMNIGQVLELHLGMAARYLGIHIATPVFDGAREEDVWGTIEEAGMANDAKTILYDGRTGEPFDNRVSVGVMYMIKLAHMVDDKLHARSTGPYSLVTQQPLGGKAQFGGQRFGEMEVWALEAYGAAYTLQEILTVKSDDVVGRVKTYEAIVKGENVPEPGVPESFKVLIKELQSLGMDVKMMSSDDTEIEMRDTEDDDDHQSADKLNVEVETTKE</sequence>
<reference key="1">
    <citation type="submission" date="2009-02" db="EMBL/GenBank/DDBJ databases">
        <title>Genome sequence of Bacillus cereus 03BB102.</title>
        <authorList>
            <person name="Dodson R.J."/>
            <person name="Jackson P."/>
            <person name="Munk A.C."/>
            <person name="Brettin T."/>
            <person name="Bruce D."/>
            <person name="Detter C."/>
            <person name="Tapia R."/>
            <person name="Han C."/>
            <person name="Sutton G."/>
            <person name="Sims D."/>
        </authorList>
    </citation>
    <scope>NUCLEOTIDE SEQUENCE [LARGE SCALE GENOMIC DNA]</scope>
    <source>
        <strain>03BB102</strain>
    </source>
</reference>
<evidence type="ECO:0000255" key="1">
    <source>
        <dbReference type="HAMAP-Rule" id="MF_01321"/>
    </source>
</evidence>
<evidence type="ECO:0000256" key="2">
    <source>
        <dbReference type="SAM" id="MobiDB-lite"/>
    </source>
</evidence>
<name>RPOB_BACC3</name>
<feature type="chain" id="PRO_1000165788" description="DNA-directed RNA polymerase subunit beta">
    <location>
        <begin position="1"/>
        <end position="1177"/>
    </location>
</feature>
<feature type="region of interest" description="Disordered" evidence="2">
    <location>
        <begin position="1147"/>
        <end position="1177"/>
    </location>
</feature>
<feature type="compositionally biased region" description="Acidic residues" evidence="2">
    <location>
        <begin position="1147"/>
        <end position="1161"/>
    </location>
</feature>
<feature type="compositionally biased region" description="Basic and acidic residues" evidence="2">
    <location>
        <begin position="1162"/>
        <end position="1177"/>
    </location>
</feature>
<comment type="function">
    <text evidence="1">DNA-dependent RNA polymerase catalyzes the transcription of DNA into RNA using the four ribonucleoside triphosphates as substrates.</text>
</comment>
<comment type="catalytic activity">
    <reaction evidence="1">
        <text>RNA(n) + a ribonucleoside 5'-triphosphate = RNA(n+1) + diphosphate</text>
        <dbReference type="Rhea" id="RHEA:21248"/>
        <dbReference type="Rhea" id="RHEA-COMP:14527"/>
        <dbReference type="Rhea" id="RHEA-COMP:17342"/>
        <dbReference type="ChEBI" id="CHEBI:33019"/>
        <dbReference type="ChEBI" id="CHEBI:61557"/>
        <dbReference type="ChEBI" id="CHEBI:140395"/>
        <dbReference type="EC" id="2.7.7.6"/>
    </reaction>
</comment>
<comment type="subunit">
    <text evidence="1">The RNAP catalytic core consists of 2 alpha, 1 beta, 1 beta' and 1 omega subunit. When a sigma factor is associated with the core the holoenzyme is formed, which can initiate transcription.</text>
</comment>
<comment type="similarity">
    <text evidence="1">Belongs to the RNA polymerase beta chain family.</text>
</comment>
<protein>
    <recommendedName>
        <fullName evidence="1">DNA-directed RNA polymerase subunit beta</fullName>
        <shortName evidence="1">RNAP subunit beta</shortName>
        <ecNumber evidence="1">2.7.7.6</ecNumber>
    </recommendedName>
    <alternativeName>
        <fullName evidence="1">RNA polymerase subunit beta</fullName>
    </alternativeName>
    <alternativeName>
        <fullName evidence="1">Transcriptase subunit beta</fullName>
    </alternativeName>
</protein>
<accession>C1ET31</accession>
<keyword id="KW-0240">DNA-directed RNA polymerase</keyword>
<keyword id="KW-0548">Nucleotidyltransferase</keyword>
<keyword id="KW-0804">Transcription</keyword>
<keyword id="KW-0808">Transferase</keyword>